<accession>Q82ST5</accession>
<name>LFTR_NITEU</name>
<protein>
    <recommendedName>
        <fullName evidence="1">Leucyl/phenylalanyl-tRNA--protein transferase</fullName>
        <ecNumber evidence="1">2.3.2.6</ecNumber>
    </recommendedName>
    <alternativeName>
        <fullName evidence="1">L/F-transferase</fullName>
    </alternativeName>
    <alternativeName>
        <fullName evidence="1">Leucyltransferase</fullName>
    </alternativeName>
    <alternativeName>
        <fullName evidence="1">Phenyalanyltransferase</fullName>
    </alternativeName>
</protein>
<keyword id="KW-0012">Acyltransferase</keyword>
<keyword id="KW-0963">Cytoplasm</keyword>
<keyword id="KW-1185">Reference proteome</keyword>
<keyword id="KW-0808">Transferase</keyword>
<reference key="1">
    <citation type="journal article" date="2003" name="J. Bacteriol.">
        <title>Complete genome sequence of the ammonia-oxidizing bacterium and obligate chemolithoautotroph Nitrosomonas europaea.</title>
        <authorList>
            <person name="Chain P."/>
            <person name="Lamerdin J.E."/>
            <person name="Larimer F.W."/>
            <person name="Regala W."/>
            <person name="Lao V."/>
            <person name="Land M.L."/>
            <person name="Hauser L."/>
            <person name="Hooper A.B."/>
            <person name="Klotz M.G."/>
            <person name="Norton J."/>
            <person name="Sayavedra-Soto L.A."/>
            <person name="Arciero D.M."/>
            <person name="Hommes N.G."/>
            <person name="Whittaker M.M."/>
            <person name="Arp D.J."/>
        </authorList>
    </citation>
    <scope>NUCLEOTIDE SEQUENCE [LARGE SCALE GENOMIC DNA]</scope>
    <source>
        <strain>ATCC 19718 / CIP 103999 / KCTC 2705 / NBRC 14298</strain>
    </source>
</reference>
<comment type="function">
    <text evidence="1">Functions in the N-end rule pathway of protein degradation where it conjugates Leu, Phe and, less efficiently, Met from aminoacyl-tRNAs to the N-termini of proteins containing an N-terminal arginine or lysine.</text>
</comment>
<comment type="catalytic activity">
    <reaction evidence="1">
        <text>N-terminal L-lysyl-[protein] + L-leucyl-tRNA(Leu) = N-terminal L-leucyl-L-lysyl-[protein] + tRNA(Leu) + H(+)</text>
        <dbReference type="Rhea" id="RHEA:12340"/>
        <dbReference type="Rhea" id="RHEA-COMP:9613"/>
        <dbReference type="Rhea" id="RHEA-COMP:9622"/>
        <dbReference type="Rhea" id="RHEA-COMP:12670"/>
        <dbReference type="Rhea" id="RHEA-COMP:12671"/>
        <dbReference type="ChEBI" id="CHEBI:15378"/>
        <dbReference type="ChEBI" id="CHEBI:65249"/>
        <dbReference type="ChEBI" id="CHEBI:78442"/>
        <dbReference type="ChEBI" id="CHEBI:78494"/>
        <dbReference type="ChEBI" id="CHEBI:133043"/>
        <dbReference type="EC" id="2.3.2.6"/>
    </reaction>
</comment>
<comment type="catalytic activity">
    <reaction evidence="1">
        <text>N-terminal L-arginyl-[protein] + L-leucyl-tRNA(Leu) = N-terminal L-leucyl-L-arginyl-[protein] + tRNA(Leu) + H(+)</text>
        <dbReference type="Rhea" id="RHEA:50416"/>
        <dbReference type="Rhea" id="RHEA-COMP:9613"/>
        <dbReference type="Rhea" id="RHEA-COMP:9622"/>
        <dbReference type="Rhea" id="RHEA-COMP:12672"/>
        <dbReference type="Rhea" id="RHEA-COMP:12673"/>
        <dbReference type="ChEBI" id="CHEBI:15378"/>
        <dbReference type="ChEBI" id="CHEBI:64719"/>
        <dbReference type="ChEBI" id="CHEBI:78442"/>
        <dbReference type="ChEBI" id="CHEBI:78494"/>
        <dbReference type="ChEBI" id="CHEBI:133044"/>
        <dbReference type="EC" id="2.3.2.6"/>
    </reaction>
</comment>
<comment type="catalytic activity">
    <reaction evidence="1">
        <text>L-phenylalanyl-tRNA(Phe) + an N-terminal L-alpha-aminoacyl-[protein] = an N-terminal L-phenylalanyl-L-alpha-aminoacyl-[protein] + tRNA(Phe)</text>
        <dbReference type="Rhea" id="RHEA:43632"/>
        <dbReference type="Rhea" id="RHEA-COMP:9668"/>
        <dbReference type="Rhea" id="RHEA-COMP:9699"/>
        <dbReference type="Rhea" id="RHEA-COMP:10636"/>
        <dbReference type="Rhea" id="RHEA-COMP:10637"/>
        <dbReference type="ChEBI" id="CHEBI:78442"/>
        <dbReference type="ChEBI" id="CHEBI:78531"/>
        <dbReference type="ChEBI" id="CHEBI:78597"/>
        <dbReference type="ChEBI" id="CHEBI:83561"/>
        <dbReference type="EC" id="2.3.2.6"/>
    </reaction>
</comment>
<comment type="subcellular location">
    <subcellularLocation>
        <location evidence="1">Cytoplasm</location>
    </subcellularLocation>
</comment>
<comment type="similarity">
    <text evidence="1">Belongs to the L/F-transferase family.</text>
</comment>
<proteinExistence type="inferred from homology"/>
<organism>
    <name type="scientific">Nitrosomonas europaea (strain ATCC 19718 / CIP 103999 / KCTC 2705 / NBRC 14298)</name>
    <dbReference type="NCBI Taxonomy" id="228410"/>
    <lineage>
        <taxon>Bacteria</taxon>
        <taxon>Pseudomonadati</taxon>
        <taxon>Pseudomonadota</taxon>
        <taxon>Betaproteobacteria</taxon>
        <taxon>Nitrosomonadales</taxon>
        <taxon>Nitrosomonadaceae</taxon>
        <taxon>Nitrosomonas</taxon>
    </lineage>
</organism>
<feature type="chain" id="PRO_0000207231" description="Leucyl/phenylalanyl-tRNA--protein transferase">
    <location>
        <begin position="1"/>
        <end position="236"/>
    </location>
</feature>
<sequence length="236" mass="26753">MIRTLYSDTPFPPLEQALIEPNGLLAAGGDLSPERLISAYRQGIFPWFNPGEIILWWSPDPRMVLFPRELKISRSLHKTLKKNDYQIRTDSAFTEVMQACAAPREDQAGTWIHEEMIAAYTALHQMGVAHSVETWIEGELAGGLYGVAIGRAFFGESMFSRATDASKIALVHLARQLENWGYGLIDCQMKTAHLMSMGAREIPRSQFSKRLNQLNALPGQNRKWYFDFTYPGRSEQ</sequence>
<dbReference type="EC" id="2.3.2.6" evidence="1"/>
<dbReference type="EMBL" id="AL954747">
    <property type="protein sequence ID" value="CAD86131.1"/>
    <property type="molecule type" value="Genomic_DNA"/>
</dbReference>
<dbReference type="RefSeq" id="WP_011112712.1">
    <property type="nucleotide sequence ID" value="NC_004757.1"/>
</dbReference>
<dbReference type="SMR" id="Q82ST5"/>
<dbReference type="STRING" id="228410.NE2219"/>
<dbReference type="GeneID" id="87105354"/>
<dbReference type="KEGG" id="neu:NE2219"/>
<dbReference type="eggNOG" id="COG2360">
    <property type="taxonomic scope" value="Bacteria"/>
</dbReference>
<dbReference type="HOGENOM" id="CLU_075045_0_0_4"/>
<dbReference type="OrthoDB" id="9790282at2"/>
<dbReference type="PhylomeDB" id="Q82ST5"/>
<dbReference type="Proteomes" id="UP000001416">
    <property type="component" value="Chromosome"/>
</dbReference>
<dbReference type="GO" id="GO:0005737">
    <property type="term" value="C:cytoplasm"/>
    <property type="evidence" value="ECO:0007669"/>
    <property type="project" value="UniProtKB-SubCell"/>
</dbReference>
<dbReference type="GO" id="GO:0008914">
    <property type="term" value="F:leucyl-tRNA--protein transferase activity"/>
    <property type="evidence" value="ECO:0007669"/>
    <property type="project" value="UniProtKB-UniRule"/>
</dbReference>
<dbReference type="GO" id="GO:0030163">
    <property type="term" value="P:protein catabolic process"/>
    <property type="evidence" value="ECO:0007669"/>
    <property type="project" value="UniProtKB-UniRule"/>
</dbReference>
<dbReference type="FunFam" id="3.30.70.3550:FF:000001">
    <property type="entry name" value="Leucyl/phenylalanyl-tRNA--protein transferase"/>
    <property type="match status" value="1"/>
</dbReference>
<dbReference type="FunFam" id="3.40.630.70:FF:000001">
    <property type="entry name" value="Leucyl/phenylalanyl-tRNA--protein transferase"/>
    <property type="match status" value="1"/>
</dbReference>
<dbReference type="Gene3D" id="3.40.630.70">
    <property type="entry name" value="Leucyl/phenylalanyl-tRNA-protein transferase, C-terminal domain"/>
    <property type="match status" value="1"/>
</dbReference>
<dbReference type="Gene3D" id="3.30.70.3550">
    <property type="entry name" value="Leucyl/phenylalanyl-tRNA-protein transferase, N-terminal domain"/>
    <property type="match status" value="1"/>
</dbReference>
<dbReference type="HAMAP" id="MF_00688">
    <property type="entry name" value="Leu_Phe_trans"/>
    <property type="match status" value="1"/>
</dbReference>
<dbReference type="InterPro" id="IPR016181">
    <property type="entry name" value="Acyl_CoA_acyltransferase"/>
</dbReference>
<dbReference type="InterPro" id="IPR004616">
    <property type="entry name" value="Leu/Phe-tRNA_Trfase"/>
</dbReference>
<dbReference type="InterPro" id="IPR042203">
    <property type="entry name" value="Leu/Phe-tRNA_Trfase_C"/>
</dbReference>
<dbReference type="InterPro" id="IPR042221">
    <property type="entry name" value="Leu/Phe-tRNA_Trfase_N"/>
</dbReference>
<dbReference type="NCBIfam" id="TIGR00667">
    <property type="entry name" value="aat"/>
    <property type="match status" value="1"/>
</dbReference>
<dbReference type="PANTHER" id="PTHR30098">
    <property type="entry name" value="LEUCYL/PHENYLALANYL-TRNA--PROTEIN TRANSFERASE"/>
    <property type="match status" value="1"/>
</dbReference>
<dbReference type="PANTHER" id="PTHR30098:SF2">
    <property type="entry name" value="LEUCYL_PHENYLALANYL-TRNA--PROTEIN TRANSFERASE"/>
    <property type="match status" value="1"/>
</dbReference>
<dbReference type="Pfam" id="PF03588">
    <property type="entry name" value="Leu_Phe_trans"/>
    <property type="match status" value="1"/>
</dbReference>
<dbReference type="SUPFAM" id="SSF55729">
    <property type="entry name" value="Acyl-CoA N-acyltransferases (Nat)"/>
    <property type="match status" value="1"/>
</dbReference>
<evidence type="ECO:0000255" key="1">
    <source>
        <dbReference type="HAMAP-Rule" id="MF_00688"/>
    </source>
</evidence>
<gene>
    <name evidence="1" type="primary">aat</name>
    <name type="ordered locus">NE2219</name>
</gene>